<evidence type="ECO:0000255" key="1">
    <source>
        <dbReference type="PROSITE-ProRule" id="PRU00048"/>
    </source>
</evidence>
<evidence type="ECO:0000255" key="2">
    <source>
        <dbReference type="PROSITE-ProRule" id="PRU01117"/>
    </source>
</evidence>
<evidence type="ECO:0000256" key="3">
    <source>
        <dbReference type="SAM" id="MobiDB-lite"/>
    </source>
</evidence>
<evidence type="ECO:0000269" key="4">
    <source>
    </source>
</evidence>
<evidence type="ECO:0000303" key="5">
    <source>
    </source>
</evidence>
<evidence type="ECO:0000305" key="6"/>
<evidence type="ECO:0000305" key="7">
    <source>
    </source>
</evidence>
<evidence type="ECO:0000312" key="8">
    <source>
        <dbReference type="EMBL" id="ABD31075.1"/>
    </source>
</evidence>
<proteinExistence type="evidence at protein level"/>
<keyword id="KW-0929">Antimicrobial</keyword>
<keyword id="KW-0081">Bacteriolytic enzyme</keyword>
<keyword id="KW-0961">Cell wall biogenesis/degradation</keyword>
<keyword id="KW-0378">Hydrolase</keyword>
<keyword id="KW-1185">Reference proteome</keyword>
<sequence length="481" mass="54030">MQAKLTKNEFIEWLKTSEGKQFNVDLWYGFQCFDYANAGWKVLFGLLLKGLGAKDIPFANNFDGLATVYQNTPDFLAQPGDMVVFGSNYGAGYGHVAWVIEATLDYIIVYEQNWLGGGWTDGIEQPGWGWEKVTRRQHAYDFPMWFIRPNFKSETAPRSVQSPTQAPKKETAKPQPKAVELKIIKDVVKGYDLPKRGSNPKGIVIHNDAGSKGATAEAYRNGLVNAPLSRLEAGIAHSYVSGNTVWQALDESQVGWHTANQIGNKYYYGIEVCQSMGADNATFLKNEQATFQECARLLKKWGLPANRNTIRLHNEFTSTSCPHRSSVLHTGFDPVTRGLLPEDKRLQLKDYFIKQIRAYMDGKIPVATVSNESSASSNTVKPVASAWKRNKYGTYYMEESARFTNGNQPITVRKVGPFLSCPVGYQFQPGGYCDYTEVMLQDGHVWVGYTWEGQRYYLPIRTWNGSAPPNQILGDLWGEIS</sequence>
<protein>
    <recommendedName>
        <fullName evidence="6">Probable autolysin LytO</fullName>
        <ecNumber evidence="4">3.5.1.28</ecNumber>
    </recommendedName>
</protein>
<gene>
    <name evidence="5" type="primary">lytO</name>
    <name evidence="8" type="ordered locus">SAOUHSC_02019</name>
</gene>
<dbReference type="EC" id="3.5.1.28" evidence="4"/>
<dbReference type="EMBL" id="CP000253">
    <property type="protein sequence ID" value="ABD31075.1"/>
    <property type="molecule type" value="Genomic_DNA"/>
</dbReference>
<dbReference type="RefSeq" id="WP_001148145.1">
    <property type="nucleotide sequence ID" value="NZ_LS483365.1"/>
</dbReference>
<dbReference type="RefSeq" id="YP_500516.1">
    <property type="nucleotide sequence ID" value="NC_007795.1"/>
</dbReference>
<dbReference type="SMR" id="Q2FX77"/>
<dbReference type="STRING" id="93061.SAOUHSC_02019"/>
<dbReference type="MEROPS" id="C51.001"/>
<dbReference type="PaxDb" id="1280-SAXN108_1909"/>
<dbReference type="GeneID" id="3920473"/>
<dbReference type="KEGG" id="sao:SAOUHSC_02019"/>
<dbReference type="PATRIC" id="fig|93061.5.peg.1832"/>
<dbReference type="eggNOG" id="COG1388">
    <property type="taxonomic scope" value="Bacteria"/>
</dbReference>
<dbReference type="eggNOG" id="COG5632">
    <property type="taxonomic scope" value="Bacteria"/>
</dbReference>
<dbReference type="HOGENOM" id="CLU_050469_0_0_9"/>
<dbReference type="OrthoDB" id="2416895at2"/>
<dbReference type="Proteomes" id="UP000008816">
    <property type="component" value="Chromosome"/>
</dbReference>
<dbReference type="GO" id="GO:0008745">
    <property type="term" value="F:N-acetylmuramoyl-L-alanine amidase activity"/>
    <property type="evidence" value="ECO:0007669"/>
    <property type="project" value="UniProtKB-EC"/>
</dbReference>
<dbReference type="GO" id="GO:0071555">
    <property type="term" value="P:cell wall organization"/>
    <property type="evidence" value="ECO:0007669"/>
    <property type="project" value="UniProtKB-KW"/>
</dbReference>
<dbReference type="GO" id="GO:0042742">
    <property type="term" value="P:defense response to bacterium"/>
    <property type="evidence" value="ECO:0007669"/>
    <property type="project" value="UniProtKB-KW"/>
</dbReference>
<dbReference type="GO" id="GO:0031640">
    <property type="term" value="P:killing of cells of another organism"/>
    <property type="evidence" value="ECO:0007669"/>
    <property type="project" value="UniProtKB-KW"/>
</dbReference>
<dbReference type="GO" id="GO:0009253">
    <property type="term" value="P:peptidoglycan catabolic process"/>
    <property type="evidence" value="ECO:0007669"/>
    <property type="project" value="InterPro"/>
</dbReference>
<dbReference type="CDD" id="cd06583">
    <property type="entry name" value="PGRP"/>
    <property type="match status" value="1"/>
</dbReference>
<dbReference type="FunFam" id="3.90.1720.10:FF:000005">
    <property type="entry name" value="Amidase"/>
    <property type="match status" value="1"/>
</dbReference>
<dbReference type="FunFam" id="3.40.80.10:FF:000005">
    <property type="entry name" value="N-acetylmuramoyl-L-alanine amidase"/>
    <property type="match status" value="1"/>
</dbReference>
<dbReference type="Gene3D" id="3.90.1720.10">
    <property type="entry name" value="endopeptidase domain like (from Nostoc punctiforme)"/>
    <property type="match status" value="1"/>
</dbReference>
<dbReference type="Gene3D" id="3.40.80.10">
    <property type="entry name" value="Peptidoglycan recognition protein-like"/>
    <property type="match status" value="1"/>
</dbReference>
<dbReference type="Gene3D" id="2.30.30.40">
    <property type="entry name" value="SH3 Domains"/>
    <property type="match status" value="1"/>
</dbReference>
<dbReference type="InterPro" id="IPR036505">
    <property type="entry name" value="Amidase/PGRP_sf"/>
</dbReference>
<dbReference type="InterPro" id="IPR002502">
    <property type="entry name" value="Amidase_domain"/>
</dbReference>
<dbReference type="InterPro" id="IPR007921">
    <property type="entry name" value="CHAP_dom"/>
</dbReference>
<dbReference type="InterPro" id="IPR038765">
    <property type="entry name" value="Papain-like_cys_pep_sf"/>
</dbReference>
<dbReference type="InterPro" id="IPR003646">
    <property type="entry name" value="SH3-like_bac-type"/>
</dbReference>
<dbReference type="Pfam" id="PF01510">
    <property type="entry name" value="Amidase_2"/>
    <property type="match status" value="1"/>
</dbReference>
<dbReference type="Pfam" id="PF05257">
    <property type="entry name" value="CHAP"/>
    <property type="match status" value="1"/>
</dbReference>
<dbReference type="Pfam" id="PF08460">
    <property type="entry name" value="SH3_5"/>
    <property type="match status" value="1"/>
</dbReference>
<dbReference type="SMART" id="SM00644">
    <property type="entry name" value="Ami_2"/>
    <property type="match status" value="1"/>
</dbReference>
<dbReference type="SMART" id="SM00287">
    <property type="entry name" value="SH3b"/>
    <property type="match status" value="1"/>
</dbReference>
<dbReference type="SUPFAM" id="SSF54001">
    <property type="entry name" value="Cysteine proteinases"/>
    <property type="match status" value="1"/>
</dbReference>
<dbReference type="SUPFAM" id="SSF55846">
    <property type="entry name" value="N-acetylmuramoyl-L-alanine amidase-like"/>
    <property type="match status" value="1"/>
</dbReference>
<dbReference type="PROSITE" id="PS50911">
    <property type="entry name" value="CHAP"/>
    <property type="match status" value="1"/>
</dbReference>
<dbReference type="PROSITE" id="PS51781">
    <property type="entry name" value="SH3B"/>
    <property type="match status" value="1"/>
</dbReference>
<name>LYTO_STAA8</name>
<accession>Q2FX77</accession>
<comment type="function">
    <text evidence="4">Has weak lytic activity toward S.aureus cells.</text>
</comment>
<comment type="catalytic activity">
    <reaction evidence="4">
        <text>Hydrolyzes the link between N-acetylmuramoyl residues and L-amino acid residues in certain cell-wall glycopeptides.</text>
        <dbReference type="EC" id="3.5.1.28"/>
    </reaction>
</comment>
<comment type="similarity">
    <text evidence="6">Belongs to the N-acetylmuramoyl-L-alanine amidase 2 family.</text>
</comment>
<reference key="1">
    <citation type="book" date="2006" name="Gram positive pathogens, 2nd edition">
        <title>The Staphylococcus aureus NCTC 8325 genome.</title>
        <editorList>
            <person name="Fischetti V."/>
            <person name="Novick R."/>
            <person name="Ferretti J."/>
            <person name="Portnoy D."/>
            <person name="Rood J."/>
        </editorList>
        <authorList>
            <person name="Gillaspy A.F."/>
            <person name="Worrell V."/>
            <person name="Orvis J."/>
            <person name="Roe B.A."/>
            <person name="Dyer D.W."/>
            <person name="Iandolo J.J."/>
        </authorList>
    </citation>
    <scope>NUCLEOTIDE SEQUENCE [LARGE SCALE GENOMIC DNA]</scope>
    <source>
        <strain>NCTC 8325 / PS 47</strain>
    </source>
</reference>
<reference key="2">
    <citation type="journal article" date="2015" name="Appl. Microbiol. Biotechnol.">
        <title>Discovery of novel S. aureus autolysins and molecular engineering to enhance bacteriolytic activity.</title>
        <authorList>
            <person name="Osipovitch D.C."/>
            <person name="Therrien S."/>
            <person name="Griswold K.E."/>
        </authorList>
    </citation>
    <scope>FUNCTION</scope>
    <scope>CATALYTIC ACTIVITY</scope>
    <source>
        <strain>ATCC 35556 / SA113</strain>
    </source>
</reference>
<feature type="chain" id="PRO_0000445038" description="Probable autolysin LytO">
    <location>
        <begin position="1"/>
        <end position="481"/>
    </location>
</feature>
<feature type="domain" description="Peptidase C51" evidence="1">
    <location>
        <begin position="7"/>
        <end position="148"/>
    </location>
</feature>
<feature type="domain" description="N-acetylmuramoyl-L-alanine amidase" evidence="7">
    <location>
        <begin position="198"/>
        <end position="323"/>
    </location>
</feature>
<feature type="domain" description="SH3b" evidence="2">
    <location>
        <begin position="398"/>
        <end position="466"/>
    </location>
</feature>
<feature type="region of interest" description="Disordered" evidence="3">
    <location>
        <begin position="155"/>
        <end position="177"/>
    </location>
</feature>
<feature type="compositionally biased region" description="Polar residues" evidence="3">
    <location>
        <begin position="155"/>
        <end position="165"/>
    </location>
</feature>
<organism>
    <name type="scientific">Staphylococcus aureus (strain NCTC 8325 / PS 47)</name>
    <dbReference type="NCBI Taxonomy" id="93061"/>
    <lineage>
        <taxon>Bacteria</taxon>
        <taxon>Bacillati</taxon>
        <taxon>Bacillota</taxon>
        <taxon>Bacilli</taxon>
        <taxon>Bacillales</taxon>
        <taxon>Staphylococcaceae</taxon>
        <taxon>Staphylococcus</taxon>
    </lineage>
</organism>